<reference key="1">
    <citation type="submission" date="2007-04" db="EMBL/GenBank/DDBJ databases">
        <title>Complete sequence of Shewanella putrefaciens CN-32.</title>
        <authorList>
            <consortium name="US DOE Joint Genome Institute"/>
            <person name="Copeland A."/>
            <person name="Lucas S."/>
            <person name="Lapidus A."/>
            <person name="Barry K."/>
            <person name="Detter J.C."/>
            <person name="Glavina del Rio T."/>
            <person name="Hammon N."/>
            <person name="Israni S."/>
            <person name="Dalin E."/>
            <person name="Tice H."/>
            <person name="Pitluck S."/>
            <person name="Chain P."/>
            <person name="Malfatti S."/>
            <person name="Shin M."/>
            <person name="Vergez L."/>
            <person name="Schmutz J."/>
            <person name="Larimer F."/>
            <person name="Land M."/>
            <person name="Hauser L."/>
            <person name="Kyrpides N."/>
            <person name="Mikhailova N."/>
            <person name="Romine M.F."/>
            <person name="Fredrickson J."/>
            <person name="Tiedje J."/>
            <person name="Richardson P."/>
        </authorList>
    </citation>
    <scope>NUCLEOTIDE SEQUENCE [LARGE SCALE GENOMIC DNA]</scope>
    <source>
        <strain>CN-32 / ATCC BAA-453</strain>
    </source>
</reference>
<comment type="function">
    <text evidence="1">This protein binds to 23S rRNA in the presence of protein L20.</text>
</comment>
<comment type="subunit">
    <text evidence="1">Part of the 50S ribosomal subunit. Contacts protein L20.</text>
</comment>
<comment type="similarity">
    <text evidence="1">Belongs to the bacterial ribosomal protein bL21 family.</text>
</comment>
<feature type="chain" id="PRO_1000067897" description="Large ribosomal subunit protein bL21">
    <location>
        <begin position="1"/>
        <end position="103"/>
    </location>
</feature>
<protein>
    <recommendedName>
        <fullName evidence="1">Large ribosomal subunit protein bL21</fullName>
    </recommendedName>
    <alternativeName>
        <fullName evidence="2">50S ribosomal protein L21</fullName>
    </alternativeName>
</protein>
<proteinExistence type="inferred from homology"/>
<name>RL21_SHEPC</name>
<evidence type="ECO:0000255" key="1">
    <source>
        <dbReference type="HAMAP-Rule" id="MF_01363"/>
    </source>
</evidence>
<evidence type="ECO:0000305" key="2"/>
<accession>A4Y425</accession>
<organism>
    <name type="scientific">Shewanella putrefaciens (strain CN-32 / ATCC BAA-453)</name>
    <dbReference type="NCBI Taxonomy" id="319224"/>
    <lineage>
        <taxon>Bacteria</taxon>
        <taxon>Pseudomonadati</taxon>
        <taxon>Pseudomonadota</taxon>
        <taxon>Gammaproteobacteria</taxon>
        <taxon>Alteromonadales</taxon>
        <taxon>Shewanellaceae</taxon>
        <taxon>Shewanella</taxon>
    </lineage>
</organism>
<gene>
    <name evidence="1" type="primary">rplU</name>
    <name type="ordered locus">Sputcn32_0979</name>
</gene>
<dbReference type="EMBL" id="CP000681">
    <property type="protein sequence ID" value="ABP74708.1"/>
    <property type="molecule type" value="Genomic_DNA"/>
</dbReference>
<dbReference type="SMR" id="A4Y425"/>
<dbReference type="STRING" id="319224.Sputcn32_0979"/>
<dbReference type="KEGG" id="spc:Sputcn32_0979"/>
<dbReference type="eggNOG" id="COG0261">
    <property type="taxonomic scope" value="Bacteria"/>
</dbReference>
<dbReference type="HOGENOM" id="CLU_061463_3_3_6"/>
<dbReference type="GO" id="GO:0005737">
    <property type="term" value="C:cytoplasm"/>
    <property type="evidence" value="ECO:0007669"/>
    <property type="project" value="UniProtKB-ARBA"/>
</dbReference>
<dbReference type="GO" id="GO:1990904">
    <property type="term" value="C:ribonucleoprotein complex"/>
    <property type="evidence" value="ECO:0007669"/>
    <property type="project" value="UniProtKB-KW"/>
</dbReference>
<dbReference type="GO" id="GO:0005840">
    <property type="term" value="C:ribosome"/>
    <property type="evidence" value="ECO:0007669"/>
    <property type="project" value="UniProtKB-KW"/>
</dbReference>
<dbReference type="GO" id="GO:0019843">
    <property type="term" value="F:rRNA binding"/>
    <property type="evidence" value="ECO:0007669"/>
    <property type="project" value="UniProtKB-UniRule"/>
</dbReference>
<dbReference type="GO" id="GO:0003735">
    <property type="term" value="F:structural constituent of ribosome"/>
    <property type="evidence" value="ECO:0007669"/>
    <property type="project" value="InterPro"/>
</dbReference>
<dbReference type="GO" id="GO:0006412">
    <property type="term" value="P:translation"/>
    <property type="evidence" value="ECO:0007669"/>
    <property type="project" value="UniProtKB-UniRule"/>
</dbReference>
<dbReference type="HAMAP" id="MF_01363">
    <property type="entry name" value="Ribosomal_bL21"/>
    <property type="match status" value="1"/>
</dbReference>
<dbReference type="InterPro" id="IPR028909">
    <property type="entry name" value="bL21-like"/>
</dbReference>
<dbReference type="InterPro" id="IPR036164">
    <property type="entry name" value="bL21-like_sf"/>
</dbReference>
<dbReference type="InterPro" id="IPR001787">
    <property type="entry name" value="Ribosomal_bL21"/>
</dbReference>
<dbReference type="InterPro" id="IPR018258">
    <property type="entry name" value="Ribosomal_bL21_CS"/>
</dbReference>
<dbReference type="NCBIfam" id="TIGR00061">
    <property type="entry name" value="L21"/>
    <property type="match status" value="1"/>
</dbReference>
<dbReference type="PANTHER" id="PTHR21349">
    <property type="entry name" value="50S RIBOSOMAL PROTEIN L21"/>
    <property type="match status" value="1"/>
</dbReference>
<dbReference type="PANTHER" id="PTHR21349:SF0">
    <property type="entry name" value="LARGE RIBOSOMAL SUBUNIT PROTEIN BL21M"/>
    <property type="match status" value="1"/>
</dbReference>
<dbReference type="Pfam" id="PF00829">
    <property type="entry name" value="Ribosomal_L21p"/>
    <property type="match status" value="1"/>
</dbReference>
<dbReference type="SUPFAM" id="SSF141091">
    <property type="entry name" value="L21p-like"/>
    <property type="match status" value="1"/>
</dbReference>
<dbReference type="PROSITE" id="PS01169">
    <property type="entry name" value="RIBOSOMAL_L21"/>
    <property type="match status" value="1"/>
</dbReference>
<keyword id="KW-0687">Ribonucleoprotein</keyword>
<keyword id="KW-0689">Ribosomal protein</keyword>
<keyword id="KW-0694">RNA-binding</keyword>
<keyword id="KW-0699">rRNA-binding</keyword>
<sequence length="103" mass="11368">MYAVFQSGGKQHRVAEGHTVRLEKLEVATGSTVEFDQVLLIADGETVHVGAPLVAGGKVVAEVVSHGRGEKVTIVKFRRRKHHDKKMGHRQWFTEVKITAINA</sequence>